<dbReference type="EMBL" id="CP000816">
    <property type="protein sequence ID" value="ABU82584.1"/>
    <property type="molecule type" value="Genomic_DNA"/>
</dbReference>
<dbReference type="RefSeq" id="WP_012123548.1">
    <property type="nucleotide sequence ID" value="NC_009776.1"/>
</dbReference>
<dbReference type="SMR" id="A8ACD2"/>
<dbReference type="STRING" id="453591.Igni_1408"/>
<dbReference type="GeneID" id="5561808"/>
<dbReference type="KEGG" id="iho:Igni_1408"/>
<dbReference type="eggNOG" id="arCOG04095">
    <property type="taxonomic scope" value="Archaea"/>
</dbReference>
<dbReference type="HOGENOM" id="CLU_095071_3_0_2"/>
<dbReference type="OrthoDB" id="23569at2157"/>
<dbReference type="PhylomeDB" id="A8ACD2"/>
<dbReference type="Proteomes" id="UP000000262">
    <property type="component" value="Chromosome"/>
</dbReference>
<dbReference type="GO" id="GO:0022625">
    <property type="term" value="C:cytosolic large ribosomal subunit"/>
    <property type="evidence" value="ECO:0007669"/>
    <property type="project" value="TreeGrafter"/>
</dbReference>
<dbReference type="GO" id="GO:0070180">
    <property type="term" value="F:large ribosomal subunit rRNA binding"/>
    <property type="evidence" value="ECO:0007669"/>
    <property type="project" value="TreeGrafter"/>
</dbReference>
<dbReference type="GO" id="GO:0003735">
    <property type="term" value="F:structural constituent of ribosome"/>
    <property type="evidence" value="ECO:0007669"/>
    <property type="project" value="InterPro"/>
</dbReference>
<dbReference type="GO" id="GO:0006412">
    <property type="term" value="P:translation"/>
    <property type="evidence" value="ECO:0007669"/>
    <property type="project" value="UniProtKB-UniRule"/>
</dbReference>
<dbReference type="CDD" id="cd00337">
    <property type="entry name" value="Ribosomal_uL14"/>
    <property type="match status" value="1"/>
</dbReference>
<dbReference type="FunFam" id="2.40.150.20:FF:000007">
    <property type="entry name" value="50S ribosomal protein L14"/>
    <property type="match status" value="1"/>
</dbReference>
<dbReference type="Gene3D" id="2.40.150.20">
    <property type="entry name" value="Ribosomal protein L14"/>
    <property type="match status" value="1"/>
</dbReference>
<dbReference type="HAMAP" id="MF_01367">
    <property type="entry name" value="Ribosomal_uL14"/>
    <property type="match status" value="1"/>
</dbReference>
<dbReference type="InterPro" id="IPR000218">
    <property type="entry name" value="Ribosomal_uL14"/>
</dbReference>
<dbReference type="InterPro" id="IPR019971">
    <property type="entry name" value="Ribosomal_uL14_arc"/>
</dbReference>
<dbReference type="InterPro" id="IPR019972">
    <property type="entry name" value="Ribosomal_uL14_CS"/>
</dbReference>
<dbReference type="InterPro" id="IPR036853">
    <property type="entry name" value="Ribosomal_uL14_sf"/>
</dbReference>
<dbReference type="NCBIfam" id="NF006344">
    <property type="entry name" value="PRK08571.1"/>
    <property type="match status" value="1"/>
</dbReference>
<dbReference type="NCBIfam" id="TIGR03673">
    <property type="entry name" value="uL14_arch"/>
    <property type="match status" value="1"/>
</dbReference>
<dbReference type="PANTHER" id="PTHR11761">
    <property type="entry name" value="50S/60S RIBOSOMAL PROTEIN L14/L23"/>
    <property type="match status" value="1"/>
</dbReference>
<dbReference type="PANTHER" id="PTHR11761:SF8">
    <property type="entry name" value="LARGE RIBOSOMAL SUBUNIT PROTEIN UL14"/>
    <property type="match status" value="1"/>
</dbReference>
<dbReference type="Pfam" id="PF00238">
    <property type="entry name" value="Ribosomal_L14"/>
    <property type="match status" value="1"/>
</dbReference>
<dbReference type="SMART" id="SM01374">
    <property type="entry name" value="Ribosomal_L14"/>
    <property type="match status" value="1"/>
</dbReference>
<dbReference type="SUPFAM" id="SSF50193">
    <property type="entry name" value="Ribosomal protein L14"/>
    <property type="match status" value="1"/>
</dbReference>
<dbReference type="PROSITE" id="PS00049">
    <property type="entry name" value="RIBOSOMAL_L14"/>
    <property type="match status" value="1"/>
</dbReference>
<gene>
    <name evidence="1" type="primary">rpl14</name>
    <name type="ordered locus">Igni_1408</name>
</gene>
<protein>
    <recommendedName>
        <fullName evidence="1">Large ribosomal subunit protein uL14</fullName>
    </recommendedName>
    <alternativeName>
        <fullName evidence="2">50S ribosomal protein L14</fullName>
    </alternativeName>
</protein>
<comment type="function">
    <text evidence="1">Binds to 23S rRNA. Forms part of two intersubunit bridges in the 70S ribosome.</text>
</comment>
<comment type="subunit">
    <text evidence="1">Part of the 50S ribosomal subunit. Forms a cluster with proteins L3 and L24e, part of which may contact the 16S rRNA in 2 intersubunit bridges.</text>
</comment>
<comment type="similarity">
    <text evidence="1">Belongs to the universal ribosomal protein uL14 family.</text>
</comment>
<sequence length="137" mass="14905">MVKASANKSRRKVVTGLQVGSYVKVTDNSGAKVAMIIGVPGYHGRLRRIPPAGVGDMVVVTVKKGTPEMRHQVVRAIVVRQRKPFRRPDGTWVAFEDNAVVIVSEDGTPRGSEIRGPVAREAVERWPRIGNVASIVV</sequence>
<accession>A8ACD2</accession>
<reference key="1">
    <citation type="journal article" date="2008" name="Genome Biol.">
        <title>A genomic analysis of the archaeal system Ignicoccus hospitalis-Nanoarchaeum equitans.</title>
        <authorList>
            <person name="Podar M."/>
            <person name="Anderson I."/>
            <person name="Makarova K.S."/>
            <person name="Elkins J.G."/>
            <person name="Ivanova N."/>
            <person name="Wall M.A."/>
            <person name="Lykidis A."/>
            <person name="Mavromatis K."/>
            <person name="Sun H."/>
            <person name="Hudson M.E."/>
            <person name="Chen W."/>
            <person name="Deciu C."/>
            <person name="Hutchison D."/>
            <person name="Eads J.R."/>
            <person name="Anderson A."/>
            <person name="Fernandes F."/>
            <person name="Szeto E."/>
            <person name="Lapidus A."/>
            <person name="Kyrpides N.C."/>
            <person name="Saier M.H. Jr."/>
            <person name="Richardson P.M."/>
            <person name="Rachel R."/>
            <person name="Huber H."/>
            <person name="Eisen J.A."/>
            <person name="Koonin E.V."/>
            <person name="Keller M."/>
            <person name="Stetter K.O."/>
        </authorList>
    </citation>
    <scope>NUCLEOTIDE SEQUENCE [LARGE SCALE GENOMIC DNA]</scope>
    <source>
        <strain>KIN4/I / DSM 18386 / JCM 14125</strain>
    </source>
</reference>
<proteinExistence type="inferred from homology"/>
<organism>
    <name type="scientific">Ignicoccus hospitalis (strain KIN4/I / DSM 18386 / JCM 14125)</name>
    <dbReference type="NCBI Taxonomy" id="453591"/>
    <lineage>
        <taxon>Archaea</taxon>
        <taxon>Thermoproteota</taxon>
        <taxon>Thermoprotei</taxon>
        <taxon>Desulfurococcales</taxon>
        <taxon>Desulfurococcaceae</taxon>
        <taxon>Ignicoccus</taxon>
    </lineage>
</organism>
<name>RL14_IGNH4</name>
<feature type="chain" id="PRO_1000055598" description="Large ribosomal subunit protein uL14">
    <location>
        <begin position="1"/>
        <end position="137"/>
    </location>
</feature>
<evidence type="ECO:0000255" key="1">
    <source>
        <dbReference type="HAMAP-Rule" id="MF_01367"/>
    </source>
</evidence>
<evidence type="ECO:0000305" key="2"/>
<keyword id="KW-1185">Reference proteome</keyword>
<keyword id="KW-0687">Ribonucleoprotein</keyword>
<keyword id="KW-0689">Ribosomal protein</keyword>
<keyword id="KW-0694">RNA-binding</keyword>
<keyword id="KW-0699">rRNA-binding</keyword>